<proteinExistence type="inferred from homology"/>
<gene>
    <name evidence="1" type="primary">thyA</name>
    <name type="ordered locus">Shewmr7_2943</name>
</gene>
<name>TYSY_SHESR</name>
<comment type="function">
    <text evidence="1">Catalyzes the reductive methylation of 2'-deoxyuridine-5'-monophosphate (dUMP) to 2'-deoxythymidine-5'-monophosphate (dTMP) while utilizing 5,10-methylenetetrahydrofolate (mTHF) as the methyl donor and reductant in the reaction, yielding dihydrofolate (DHF) as a by-product. This enzymatic reaction provides an intracellular de novo source of dTMP, an essential precursor for DNA biosynthesis.</text>
</comment>
<comment type="catalytic activity">
    <reaction evidence="1">
        <text>dUMP + (6R)-5,10-methylene-5,6,7,8-tetrahydrofolate = 7,8-dihydrofolate + dTMP</text>
        <dbReference type="Rhea" id="RHEA:12104"/>
        <dbReference type="ChEBI" id="CHEBI:15636"/>
        <dbReference type="ChEBI" id="CHEBI:57451"/>
        <dbReference type="ChEBI" id="CHEBI:63528"/>
        <dbReference type="ChEBI" id="CHEBI:246422"/>
        <dbReference type="EC" id="2.1.1.45"/>
    </reaction>
</comment>
<comment type="pathway">
    <text evidence="1">Pyrimidine metabolism; dTTP biosynthesis.</text>
</comment>
<comment type="subunit">
    <text evidence="1">Homodimer.</text>
</comment>
<comment type="subcellular location">
    <subcellularLocation>
        <location evidence="1">Cytoplasm</location>
    </subcellularLocation>
</comment>
<comment type="similarity">
    <text evidence="1">Belongs to the thymidylate synthase family. Bacterial-type ThyA subfamily.</text>
</comment>
<protein>
    <recommendedName>
        <fullName evidence="1">Thymidylate synthase</fullName>
        <shortName evidence="1">TS</shortName>
        <shortName evidence="1">TSase</shortName>
        <ecNumber evidence="1">2.1.1.45</ecNumber>
    </recommendedName>
</protein>
<feature type="chain" id="PRO_1000000676" description="Thymidylate synthase">
    <location>
        <begin position="1"/>
        <end position="264"/>
    </location>
</feature>
<feature type="active site" description="Nucleophile" evidence="1">
    <location>
        <position position="146"/>
    </location>
</feature>
<feature type="binding site" description="in other chain" evidence="1">
    <location>
        <position position="21"/>
    </location>
    <ligand>
        <name>dUMP</name>
        <dbReference type="ChEBI" id="CHEBI:246422"/>
        <note>ligand shared between dimeric partners</note>
    </ligand>
</feature>
<feature type="binding site" evidence="1">
    <location>
        <position position="51"/>
    </location>
    <ligand>
        <name>(6R)-5,10-methylene-5,6,7,8-tetrahydrofolate</name>
        <dbReference type="ChEBI" id="CHEBI:15636"/>
    </ligand>
</feature>
<feature type="binding site" evidence="1">
    <location>
        <begin position="126"/>
        <end position="127"/>
    </location>
    <ligand>
        <name>dUMP</name>
        <dbReference type="ChEBI" id="CHEBI:246422"/>
        <note>ligand shared between dimeric partners</note>
    </ligand>
</feature>
<feature type="binding site" description="in other chain" evidence="1">
    <location>
        <begin position="166"/>
        <end position="169"/>
    </location>
    <ligand>
        <name>dUMP</name>
        <dbReference type="ChEBI" id="CHEBI:246422"/>
        <note>ligand shared between dimeric partners</note>
    </ligand>
</feature>
<feature type="binding site" evidence="1">
    <location>
        <position position="169"/>
    </location>
    <ligand>
        <name>(6R)-5,10-methylene-5,6,7,8-tetrahydrofolate</name>
        <dbReference type="ChEBI" id="CHEBI:15636"/>
    </ligand>
</feature>
<feature type="binding site" description="in other chain" evidence="1">
    <location>
        <position position="177"/>
    </location>
    <ligand>
        <name>dUMP</name>
        <dbReference type="ChEBI" id="CHEBI:246422"/>
        <note>ligand shared between dimeric partners</note>
    </ligand>
</feature>
<feature type="binding site" description="in other chain" evidence="1">
    <location>
        <begin position="207"/>
        <end position="209"/>
    </location>
    <ligand>
        <name>dUMP</name>
        <dbReference type="ChEBI" id="CHEBI:246422"/>
        <note>ligand shared between dimeric partners</note>
    </ligand>
</feature>
<feature type="binding site" evidence="1">
    <location>
        <position position="263"/>
    </location>
    <ligand>
        <name>(6R)-5,10-methylene-5,6,7,8-tetrahydrofolate</name>
        <dbReference type="ChEBI" id="CHEBI:15636"/>
    </ligand>
</feature>
<reference key="1">
    <citation type="submission" date="2006-08" db="EMBL/GenBank/DDBJ databases">
        <title>Complete sequence of chromosome 1 of Shewanella sp. MR-7.</title>
        <authorList>
            <person name="Copeland A."/>
            <person name="Lucas S."/>
            <person name="Lapidus A."/>
            <person name="Barry K."/>
            <person name="Detter J.C."/>
            <person name="Glavina del Rio T."/>
            <person name="Hammon N."/>
            <person name="Israni S."/>
            <person name="Dalin E."/>
            <person name="Tice H."/>
            <person name="Pitluck S."/>
            <person name="Kiss H."/>
            <person name="Brettin T."/>
            <person name="Bruce D."/>
            <person name="Han C."/>
            <person name="Tapia R."/>
            <person name="Gilna P."/>
            <person name="Schmutz J."/>
            <person name="Larimer F."/>
            <person name="Land M."/>
            <person name="Hauser L."/>
            <person name="Kyrpides N."/>
            <person name="Mikhailova N."/>
            <person name="Nealson K."/>
            <person name="Konstantinidis K."/>
            <person name="Klappenbach J."/>
            <person name="Tiedje J."/>
            <person name="Richardson P."/>
        </authorList>
    </citation>
    <scope>NUCLEOTIDE SEQUENCE [LARGE SCALE GENOMIC DNA]</scope>
    <source>
        <strain>MR-7</strain>
    </source>
</reference>
<organism>
    <name type="scientific">Shewanella sp. (strain MR-7)</name>
    <dbReference type="NCBI Taxonomy" id="60481"/>
    <lineage>
        <taxon>Bacteria</taxon>
        <taxon>Pseudomonadati</taxon>
        <taxon>Pseudomonadota</taxon>
        <taxon>Gammaproteobacteria</taxon>
        <taxon>Alteromonadales</taxon>
        <taxon>Shewanellaceae</taxon>
        <taxon>Shewanella</taxon>
    </lineage>
</organism>
<sequence length="264" mass="30061">MQQYLDLMKHILAEGVDKSDRTGTGTRSVFGYQMRFDLSKGFPLVTTKKCHMRSIIHELLWFLKGDTNIAYLRDNKVSIWDEWADENGDLGPVYGAQWRSWPTQSGDAIDQIAQVIAQIKSQPDSRRLIVSAWNVGELDKMALAPCHAFFQFYVADGKLSCQLYQRSCDVFLGLPFNIASYALLTMMVAQQCDLALGDFVWTGGDTHLYSNHMEQTALQLSREPRPLPTMTILRKPASIFDYQFEDFELTNYDPHPHIKAPVAV</sequence>
<dbReference type="EC" id="2.1.1.45" evidence="1"/>
<dbReference type="EMBL" id="CP000444">
    <property type="protein sequence ID" value="ABI43927.1"/>
    <property type="molecule type" value="Genomic_DNA"/>
</dbReference>
<dbReference type="SMR" id="Q0HSH8"/>
<dbReference type="KEGG" id="shm:Shewmr7_2943"/>
<dbReference type="HOGENOM" id="CLU_021669_0_0_6"/>
<dbReference type="UniPathway" id="UPA00575"/>
<dbReference type="GO" id="GO:0005829">
    <property type="term" value="C:cytosol"/>
    <property type="evidence" value="ECO:0007669"/>
    <property type="project" value="TreeGrafter"/>
</dbReference>
<dbReference type="GO" id="GO:0004799">
    <property type="term" value="F:thymidylate synthase activity"/>
    <property type="evidence" value="ECO:0007669"/>
    <property type="project" value="UniProtKB-UniRule"/>
</dbReference>
<dbReference type="GO" id="GO:0006231">
    <property type="term" value="P:dTMP biosynthetic process"/>
    <property type="evidence" value="ECO:0007669"/>
    <property type="project" value="UniProtKB-UniRule"/>
</dbReference>
<dbReference type="GO" id="GO:0006235">
    <property type="term" value="P:dTTP biosynthetic process"/>
    <property type="evidence" value="ECO:0007669"/>
    <property type="project" value="UniProtKB-UniRule"/>
</dbReference>
<dbReference type="GO" id="GO:0032259">
    <property type="term" value="P:methylation"/>
    <property type="evidence" value="ECO:0007669"/>
    <property type="project" value="UniProtKB-KW"/>
</dbReference>
<dbReference type="CDD" id="cd00351">
    <property type="entry name" value="TS_Pyrimidine_HMase"/>
    <property type="match status" value="1"/>
</dbReference>
<dbReference type="FunFam" id="3.30.572.10:FF:000001">
    <property type="entry name" value="Thymidylate synthase"/>
    <property type="match status" value="1"/>
</dbReference>
<dbReference type="Gene3D" id="3.30.572.10">
    <property type="entry name" value="Thymidylate synthase/dCMP hydroxymethylase domain"/>
    <property type="match status" value="1"/>
</dbReference>
<dbReference type="HAMAP" id="MF_00008">
    <property type="entry name" value="Thymidy_synth_bact"/>
    <property type="match status" value="1"/>
</dbReference>
<dbReference type="InterPro" id="IPR045097">
    <property type="entry name" value="Thymidate_synth/dCMP_Mease"/>
</dbReference>
<dbReference type="InterPro" id="IPR023451">
    <property type="entry name" value="Thymidate_synth/dCMP_Mease_dom"/>
</dbReference>
<dbReference type="InterPro" id="IPR036926">
    <property type="entry name" value="Thymidate_synth/dCMP_Mease_sf"/>
</dbReference>
<dbReference type="InterPro" id="IPR000398">
    <property type="entry name" value="Thymidylate_synthase"/>
</dbReference>
<dbReference type="InterPro" id="IPR020940">
    <property type="entry name" value="Thymidylate_synthase_AS"/>
</dbReference>
<dbReference type="NCBIfam" id="NF002497">
    <property type="entry name" value="PRK01827.1-3"/>
    <property type="match status" value="1"/>
</dbReference>
<dbReference type="NCBIfam" id="NF002499">
    <property type="entry name" value="PRK01827.1-5"/>
    <property type="match status" value="1"/>
</dbReference>
<dbReference type="NCBIfam" id="TIGR03284">
    <property type="entry name" value="thym_sym"/>
    <property type="match status" value="2"/>
</dbReference>
<dbReference type="PANTHER" id="PTHR11548:SF9">
    <property type="entry name" value="THYMIDYLATE SYNTHASE"/>
    <property type="match status" value="1"/>
</dbReference>
<dbReference type="PANTHER" id="PTHR11548">
    <property type="entry name" value="THYMIDYLATE SYNTHASE 1"/>
    <property type="match status" value="1"/>
</dbReference>
<dbReference type="Pfam" id="PF00303">
    <property type="entry name" value="Thymidylat_synt"/>
    <property type="match status" value="1"/>
</dbReference>
<dbReference type="PRINTS" id="PR00108">
    <property type="entry name" value="THYMDSNTHASE"/>
</dbReference>
<dbReference type="SUPFAM" id="SSF55831">
    <property type="entry name" value="Thymidylate synthase/dCMP hydroxymethylase"/>
    <property type="match status" value="1"/>
</dbReference>
<dbReference type="PROSITE" id="PS00091">
    <property type="entry name" value="THYMIDYLATE_SYNTHASE"/>
    <property type="match status" value="1"/>
</dbReference>
<keyword id="KW-0963">Cytoplasm</keyword>
<keyword id="KW-0489">Methyltransferase</keyword>
<keyword id="KW-0545">Nucleotide biosynthesis</keyword>
<keyword id="KW-0808">Transferase</keyword>
<evidence type="ECO:0000255" key="1">
    <source>
        <dbReference type="HAMAP-Rule" id="MF_00008"/>
    </source>
</evidence>
<accession>Q0HSH8</accession>